<name>RIMO_CAMJE</name>
<sequence length="439" mass="49861">MSKLYLMSLGCNKNLVDSEIMLGHLSAYELCDEPSKADVLIVNTCGFIDSAKKESINAILDLHEQRKKDSLLVVTGCLMQRYREELMKELPEVDLFTGVGDYERIDEMILKKTNLFSNSTYLQSENSKRIITGSNSHAFIKIAEGCNQKCSFCAIPSFKGKLKSREISSIIAELKDLVARGYKDFSFIAQDTSSYLFDKGEKDGLIRLIDEVEKIKGIRAARILYLYPTSASEALIKRIIASEIFINYFDMPLQHISDNMLKIMKRGANSTRLKEMLNLMKSAPNSFLRTGFIVGHPGESEADFEELCEFVKDFGFDRISVFAYSKEEDTAAFDMEQVPFKVINKRLKIIEKIVDEVIEKSFEKEVGQKRLVVCTGKSSEGEFFIAAKDLRWDREIDGEILINESECGNLEMGQIYECEILQNLDKKLLAKALRKVDAN</sequence>
<feature type="chain" id="PRO_0000374753" description="Ribosomal protein uS12 methylthiotransferase RimO">
    <location>
        <begin position="1"/>
        <end position="439"/>
    </location>
</feature>
<feature type="domain" description="MTTase N-terminal" evidence="1">
    <location>
        <begin position="2"/>
        <end position="114"/>
    </location>
</feature>
<feature type="domain" description="Radical SAM core" evidence="2">
    <location>
        <begin position="132"/>
        <end position="363"/>
    </location>
</feature>
<feature type="binding site" evidence="1">
    <location>
        <position position="11"/>
    </location>
    <ligand>
        <name>[4Fe-4S] cluster</name>
        <dbReference type="ChEBI" id="CHEBI:49883"/>
        <label>1</label>
    </ligand>
</feature>
<feature type="binding site" evidence="1">
    <location>
        <position position="45"/>
    </location>
    <ligand>
        <name>[4Fe-4S] cluster</name>
        <dbReference type="ChEBI" id="CHEBI:49883"/>
        <label>1</label>
    </ligand>
</feature>
<feature type="binding site" evidence="1">
    <location>
        <position position="77"/>
    </location>
    <ligand>
        <name>[4Fe-4S] cluster</name>
        <dbReference type="ChEBI" id="CHEBI:49883"/>
        <label>1</label>
    </ligand>
</feature>
<feature type="binding site" evidence="1">
    <location>
        <position position="146"/>
    </location>
    <ligand>
        <name>[4Fe-4S] cluster</name>
        <dbReference type="ChEBI" id="CHEBI:49883"/>
        <label>2</label>
        <note>4Fe-4S-S-AdoMet</note>
    </ligand>
</feature>
<feature type="binding site" evidence="1">
    <location>
        <position position="150"/>
    </location>
    <ligand>
        <name>[4Fe-4S] cluster</name>
        <dbReference type="ChEBI" id="CHEBI:49883"/>
        <label>2</label>
        <note>4Fe-4S-S-AdoMet</note>
    </ligand>
</feature>
<feature type="binding site" evidence="1">
    <location>
        <position position="153"/>
    </location>
    <ligand>
        <name>[4Fe-4S] cluster</name>
        <dbReference type="ChEBI" id="CHEBI:49883"/>
        <label>2</label>
        <note>4Fe-4S-S-AdoMet</note>
    </ligand>
</feature>
<accession>Q0P8G1</accession>
<protein>
    <recommendedName>
        <fullName evidence="1">Ribosomal protein uS12 methylthiotransferase RimO</fullName>
        <shortName evidence="1">uS12 MTTase</shortName>
        <shortName evidence="1">uS12 methylthiotransferase</shortName>
        <ecNumber evidence="1">2.8.4.4</ecNumber>
    </recommendedName>
    <alternativeName>
        <fullName evidence="1">Ribosomal protein uS12 (aspartate-C(3))-methylthiotransferase</fullName>
    </alternativeName>
    <alternativeName>
        <fullName evidence="1">Ribosome maturation factor RimO</fullName>
    </alternativeName>
</protein>
<keyword id="KW-0004">4Fe-4S</keyword>
<keyword id="KW-0963">Cytoplasm</keyword>
<keyword id="KW-0408">Iron</keyword>
<keyword id="KW-0411">Iron-sulfur</keyword>
<keyword id="KW-0479">Metal-binding</keyword>
<keyword id="KW-1185">Reference proteome</keyword>
<keyword id="KW-0949">S-adenosyl-L-methionine</keyword>
<keyword id="KW-0808">Transferase</keyword>
<gene>
    <name evidence="1" type="primary">rimO</name>
    <name type="ordered locus">Cj1454c</name>
</gene>
<organism>
    <name type="scientific">Campylobacter jejuni subsp. jejuni serotype O:2 (strain ATCC 700819 / NCTC 11168)</name>
    <dbReference type="NCBI Taxonomy" id="192222"/>
    <lineage>
        <taxon>Bacteria</taxon>
        <taxon>Pseudomonadati</taxon>
        <taxon>Campylobacterota</taxon>
        <taxon>Epsilonproteobacteria</taxon>
        <taxon>Campylobacterales</taxon>
        <taxon>Campylobacteraceae</taxon>
        <taxon>Campylobacter</taxon>
    </lineage>
</organism>
<evidence type="ECO:0000255" key="1">
    <source>
        <dbReference type="HAMAP-Rule" id="MF_01865"/>
    </source>
</evidence>
<evidence type="ECO:0000255" key="2">
    <source>
        <dbReference type="PROSITE-ProRule" id="PRU01266"/>
    </source>
</evidence>
<reference key="1">
    <citation type="journal article" date="2000" name="Nature">
        <title>The genome sequence of the food-borne pathogen Campylobacter jejuni reveals hypervariable sequences.</title>
        <authorList>
            <person name="Parkhill J."/>
            <person name="Wren B.W."/>
            <person name="Mungall K.L."/>
            <person name="Ketley J.M."/>
            <person name="Churcher C.M."/>
            <person name="Basham D."/>
            <person name="Chillingworth T."/>
            <person name="Davies R.M."/>
            <person name="Feltwell T."/>
            <person name="Holroyd S."/>
            <person name="Jagels K."/>
            <person name="Karlyshev A.V."/>
            <person name="Moule S."/>
            <person name="Pallen M.J."/>
            <person name="Penn C.W."/>
            <person name="Quail M.A."/>
            <person name="Rajandream M.A."/>
            <person name="Rutherford K.M."/>
            <person name="van Vliet A.H.M."/>
            <person name="Whitehead S."/>
            <person name="Barrell B.G."/>
        </authorList>
    </citation>
    <scope>NUCLEOTIDE SEQUENCE [LARGE SCALE GENOMIC DNA]</scope>
    <source>
        <strain>ATCC 700819 / NCTC 11168</strain>
    </source>
</reference>
<proteinExistence type="inferred from homology"/>
<dbReference type="EC" id="2.8.4.4" evidence="1"/>
<dbReference type="EMBL" id="AL111168">
    <property type="protein sequence ID" value="CAL35562.1"/>
    <property type="molecule type" value="Genomic_DNA"/>
</dbReference>
<dbReference type="PIR" id="E81291">
    <property type="entry name" value="E81291"/>
</dbReference>
<dbReference type="RefSeq" id="WP_002851299.1">
    <property type="nucleotide sequence ID" value="NZ_SZUC01000003.1"/>
</dbReference>
<dbReference type="RefSeq" id="YP_002344836.1">
    <property type="nucleotide sequence ID" value="NC_002163.1"/>
</dbReference>
<dbReference type="SMR" id="Q0P8G1"/>
<dbReference type="IntAct" id="Q0P8G1">
    <property type="interactions" value="48"/>
</dbReference>
<dbReference type="STRING" id="192222.Cj1454c"/>
<dbReference type="PaxDb" id="192222-Cj1454c"/>
<dbReference type="EnsemblBacteria" id="CAL35562">
    <property type="protein sequence ID" value="CAL35562"/>
    <property type="gene ID" value="Cj1454c"/>
</dbReference>
<dbReference type="GeneID" id="905742"/>
<dbReference type="KEGG" id="cje:Cj1454c"/>
<dbReference type="PATRIC" id="fig|192222.6.peg.1434"/>
<dbReference type="eggNOG" id="COG0621">
    <property type="taxonomic scope" value="Bacteria"/>
</dbReference>
<dbReference type="HOGENOM" id="CLU_018697_0_1_7"/>
<dbReference type="OrthoDB" id="9805215at2"/>
<dbReference type="Proteomes" id="UP000000799">
    <property type="component" value="Chromosome"/>
</dbReference>
<dbReference type="GO" id="GO:0005829">
    <property type="term" value="C:cytosol"/>
    <property type="evidence" value="ECO:0007669"/>
    <property type="project" value="TreeGrafter"/>
</dbReference>
<dbReference type="GO" id="GO:0051539">
    <property type="term" value="F:4 iron, 4 sulfur cluster binding"/>
    <property type="evidence" value="ECO:0007669"/>
    <property type="project" value="UniProtKB-UniRule"/>
</dbReference>
<dbReference type="GO" id="GO:0035599">
    <property type="term" value="F:aspartic acid methylthiotransferase activity"/>
    <property type="evidence" value="ECO:0007669"/>
    <property type="project" value="TreeGrafter"/>
</dbReference>
<dbReference type="GO" id="GO:0046872">
    <property type="term" value="F:metal ion binding"/>
    <property type="evidence" value="ECO:0007669"/>
    <property type="project" value="UniProtKB-KW"/>
</dbReference>
<dbReference type="GO" id="GO:0103039">
    <property type="term" value="F:protein methylthiotransferase activity"/>
    <property type="evidence" value="ECO:0007669"/>
    <property type="project" value="UniProtKB-EC"/>
</dbReference>
<dbReference type="GO" id="GO:0006400">
    <property type="term" value="P:tRNA modification"/>
    <property type="evidence" value="ECO:0007669"/>
    <property type="project" value="InterPro"/>
</dbReference>
<dbReference type="CDD" id="cd01335">
    <property type="entry name" value="Radical_SAM"/>
    <property type="match status" value="1"/>
</dbReference>
<dbReference type="Gene3D" id="3.40.50.12160">
    <property type="entry name" value="Methylthiotransferase, N-terminal domain"/>
    <property type="match status" value="1"/>
</dbReference>
<dbReference type="Gene3D" id="3.80.30.20">
    <property type="entry name" value="tm_1862 like domain"/>
    <property type="match status" value="1"/>
</dbReference>
<dbReference type="HAMAP" id="MF_01865">
    <property type="entry name" value="MTTase_RimO"/>
    <property type="match status" value="1"/>
</dbReference>
<dbReference type="InterPro" id="IPR006638">
    <property type="entry name" value="Elp3/MiaA/NifB-like_rSAM"/>
</dbReference>
<dbReference type="InterPro" id="IPR005839">
    <property type="entry name" value="Methylthiotransferase"/>
</dbReference>
<dbReference type="InterPro" id="IPR020612">
    <property type="entry name" value="Methylthiotransferase_CS"/>
</dbReference>
<dbReference type="InterPro" id="IPR013848">
    <property type="entry name" value="Methylthiotransferase_N"/>
</dbReference>
<dbReference type="InterPro" id="IPR038135">
    <property type="entry name" value="Methylthiotransferase_N_sf"/>
</dbReference>
<dbReference type="InterPro" id="IPR005840">
    <property type="entry name" value="Ribosomal_uS12_MeSTrfase_RimO"/>
</dbReference>
<dbReference type="InterPro" id="IPR007197">
    <property type="entry name" value="rSAM"/>
</dbReference>
<dbReference type="InterPro" id="IPR023404">
    <property type="entry name" value="rSAM_horseshoe"/>
</dbReference>
<dbReference type="NCBIfam" id="TIGR01125">
    <property type="entry name" value="30S ribosomal protein S12 methylthiotransferase RimO"/>
    <property type="match status" value="1"/>
</dbReference>
<dbReference type="NCBIfam" id="TIGR00089">
    <property type="entry name" value="MiaB/RimO family radical SAM methylthiotransferase"/>
    <property type="match status" value="1"/>
</dbReference>
<dbReference type="PANTHER" id="PTHR43837">
    <property type="entry name" value="RIBOSOMAL PROTEIN S12 METHYLTHIOTRANSFERASE RIMO"/>
    <property type="match status" value="1"/>
</dbReference>
<dbReference type="PANTHER" id="PTHR43837:SF1">
    <property type="entry name" value="RIBOSOMAL PROTEIN US12 METHYLTHIOTRANSFERASE RIMO"/>
    <property type="match status" value="1"/>
</dbReference>
<dbReference type="Pfam" id="PF04055">
    <property type="entry name" value="Radical_SAM"/>
    <property type="match status" value="1"/>
</dbReference>
<dbReference type="Pfam" id="PF00919">
    <property type="entry name" value="UPF0004"/>
    <property type="match status" value="1"/>
</dbReference>
<dbReference type="SFLD" id="SFLDG01082">
    <property type="entry name" value="B12-binding_domain_containing"/>
    <property type="match status" value="1"/>
</dbReference>
<dbReference type="SFLD" id="SFLDS00029">
    <property type="entry name" value="Radical_SAM"/>
    <property type="match status" value="1"/>
</dbReference>
<dbReference type="SFLD" id="SFLDF00274">
    <property type="entry name" value="ribosomal_protein_S12_methylth"/>
    <property type="match status" value="1"/>
</dbReference>
<dbReference type="SMART" id="SM00729">
    <property type="entry name" value="Elp3"/>
    <property type="match status" value="1"/>
</dbReference>
<dbReference type="SUPFAM" id="SSF102114">
    <property type="entry name" value="Radical SAM enzymes"/>
    <property type="match status" value="1"/>
</dbReference>
<dbReference type="PROSITE" id="PS51449">
    <property type="entry name" value="MTTASE_N"/>
    <property type="match status" value="1"/>
</dbReference>
<dbReference type="PROSITE" id="PS01278">
    <property type="entry name" value="MTTASE_RADICAL"/>
    <property type="match status" value="1"/>
</dbReference>
<dbReference type="PROSITE" id="PS51918">
    <property type="entry name" value="RADICAL_SAM"/>
    <property type="match status" value="1"/>
</dbReference>
<comment type="function">
    <text evidence="1">Catalyzes the methylthiolation of an aspartic acid residue of ribosomal protein uS12.</text>
</comment>
<comment type="catalytic activity">
    <reaction evidence="1">
        <text>L-aspartate(89)-[ribosomal protein uS12]-hydrogen + (sulfur carrier)-SH + AH2 + 2 S-adenosyl-L-methionine = 3-methylsulfanyl-L-aspartate(89)-[ribosomal protein uS12]-hydrogen + (sulfur carrier)-H + 5'-deoxyadenosine + L-methionine + A + S-adenosyl-L-homocysteine + 2 H(+)</text>
        <dbReference type="Rhea" id="RHEA:37087"/>
        <dbReference type="Rhea" id="RHEA-COMP:10460"/>
        <dbReference type="Rhea" id="RHEA-COMP:10461"/>
        <dbReference type="Rhea" id="RHEA-COMP:14737"/>
        <dbReference type="Rhea" id="RHEA-COMP:14739"/>
        <dbReference type="ChEBI" id="CHEBI:13193"/>
        <dbReference type="ChEBI" id="CHEBI:15378"/>
        <dbReference type="ChEBI" id="CHEBI:17319"/>
        <dbReference type="ChEBI" id="CHEBI:17499"/>
        <dbReference type="ChEBI" id="CHEBI:29917"/>
        <dbReference type="ChEBI" id="CHEBI:29961"/>
        <dbReference type="ChEBI" id="CHEBI:57844"/>
        <dbReference type="ChEBI" id="CHEBI:57856"/>
        <dbReference type="ChEBI" id="CHEBI:59789"/>
        <dbReference type="ChEBI" id="CHEBI:64428"/>
        <dbReference type="ChEBI" id="CHEBI:73599"/>
        <dbReference type="EC" id="2.8.4.4"/>
    </reaction>
</comment>
<comment type="cofactor">
    <cofactor evidence="1">
        <name>[4Fe-4S] cluster</name>
        <dbReference type="ChEBI" id="CHEBI:49883"/>
    </cofactor>
    <text evidence="1">Binds 2 [4Fe-4S] clusters. One cluster is coordinated with 3 cysteines and an exchangeable S-adenosyl-L-methionine.</text>
</comment>
<comment type="subcellular location">
    <subcellularLocation>
        <location evidence="1">Cytoplasm</location>
    </subcellularLocation>
</comment>
<comment type="similarity">
    <text evidence="1">Belongs to the methylthiotransferase family. RimO subfamily.</text>
</comment>